<name>AAXC_CHLT2</name>
<reference key="1">
    <citation type="journal article" date="2008" name="Genome Res.">
        <title>Chlamydia trachomatis: genome sequence analysis of lymphogranuloma venereum isolates.</title>
        <authorList>
            <person name="Thomson N.R."/>
            <person name="Holden M.T.G."/>
            <person name="Carder C."/>
            <person name="Lennard N."/>
            <person name="Lockey S.J."/>
            <person name="Marsh P."/>
            <person name="Skipp P."/>
            <person name="O'Connor C.D."/>
            <person name="Goodhead I."/>
            <person name="Norbertzcak H."/>
            <person name="Harris B."/>
            <person name="Ormond D."/>
            <person name="Rance R."/>
            <person name="Quail M.A."/>
            <person name="Parkhill J."/>
            <person name="Stephens R.S."/>
            <person name="Clarke I.N."/>
        </authorList>
    </citation>
    <scope>NUCLEOTIDE SEQUENCE [LARGE SCALE GENOMIC DNA]</scope>
    <source>
        <strain>ATCC VR-902B / DSM 19102 / 434/Bu</strain>
    </source>
</reference>
<organism>
    <name type="scientific">Chlamydia trachomatis serovar L2 (strain ATCC VR-902B / DSM 19102 / 434/Bu)</name>
    <dbReference type="NCBI Taxonomy" id="471472"/>
    <lineage>
        <taxon>Bacteria</taxon>
        <taxon>Pseudomonadati</taxon>
        <taxon>Chlamydiota</taxon>
        <taxon>Chlamydiia</taxon>
        <taxon>Chlamydiales</taxon>
        <taxon>Chlamydiaceae</taxon>
        <taxon>Chlamydia/Chlamydophila group</taxon>
        <taxon>Chlamydia</taxon>
    </lineage>
</organism>
<gene>
    <name type="primary">aaxC</name>
    <name type="synonym">arcD</name>
    <name type="ordered locus">CTL0628</name>
</gene>
<sequence>MLLKKRSPTSILGTLALTGIVISYMIGGGIFSLPQNMAASASAGAVMLAWMLSGIGIFFIANTFKTLSIIRPDLKAGIYTYSREGFGPYVGFTIAWGYWLCQIFGNVGYAVITMDALNYFFPPYFAGGNTIPAILLGSLLIWIFNYIVLRGIRQASFVNIIGVVCTLIPLLLFILITARFFKFSIFKTDFWGTAPQHTLGSIGSQLKSTMLVTLWAFIGIEGAVVISGRAANPSSVGKATILGFSGCLLIYVLLSLLPFGSLFQYQLAKIADPSTAGVLNILVGKWGEVLMNTGLLIAVLTSWLSWTILASEIPYAAAKNGTFPECFAIENSKHAPSFSLFMTSGLMQITMLLVYFSSNAWNTMLEITGVMVLPAYLTSSLFLVKFSLSKKYPKQAAIKARIAMITGLLGSLYSLWLIYAGGLQHLFMVAILLALGIPFYVDSGIRHKQEKTFLNRKEILKMTIMALAALLAIFLFSANKIHL</sequence>
<keyword id="KW-0029">Amino-acid transport</keyword>
<keyword id="KW-0050">Antiport</keyword>
<keyword id="KW-0997">Cell inner membrane</keyword>
<keyword id="KW-1003">Cell membrane</keyword>
<keyword id="KW-0472">Membrane</keyword>
<keyword id="KW-0812">Transmembrane</keyword>
<keyword id="KW-1133">Transmembrane helix</keyword>
<keyword id="KW-0813">Transport</keyword>
<keyword id="KW-0843">Virulence</keyword>
<comment type="function">
    <text evidence="1">Catalyzes the exchange of L-arginine for agmatine. The arginine uptake by the bacterium in the macrophage may be a virulence factor against the host innate immune response (By similarity).</text>
</comment>
<comment type="subcellular location">
    <subcellularLocation>
        <location evidence="1">Cell inner membrane</location>
        <topology evidence="1">Multi-pass membrane protein</topology>
    </subcellularLocation>
</comment>
<comment type="similarity">
    <text evidence="3">Belongs to the amino acid-polyamine-organocation (APC) superfamily. Basic amino acid/polyamine antiporter (APA) (TC 2.A.3.2) family.</text>
</comment>
<protein>
    <recommendedName>
        <fullName>Arginine/agmatine antiporter</fullName>
    </recommendedName>
</protein>
<dbReference type="EMBL" id="AM884176">
    <property type="protein sequence ID" value="CAP04069.1"/>
    <property type="molecule type" value="Genomic_DNA"/>
</dbReference>
<dbReference type="RefSeq" id="WP_009873766.1">
    <property type="nucleotide sequence ID" value="NC_010287.1"/>
</dbReference>
<dbReference type="RefSeq" id="YP_001654702.1">
    <property type="nucleotide sequence ID" value="NC_010287.1"/>
</dbReference>
<dbReference type="SMR" id="B0B7U3"/>
<dbReference type="KEGG" id="ctb:CTL0628"/>
<dbReference type="PATRIC" id="fig|471472.4.peg.679"/>
<dbReference type="HOGENOM" id="CLU_007946_1_2_0"/>
<dbReference type="Proteomes" id="UP001154402">
    <property type="component" value="Chromosome"/>
</dbReference>
<dbReference type="GO" id="GO:0005886">
    <property type="term" value="C:plasma membrane"/>
    <property type="evidence" value="ECO:0007669"/>
    <property type="project" value="UniProtKB-SubCell"/>
</dbReference>
<dbReference type="GO" id="GO:0015297">
    <property type="term" value="F:antiporter activity"/>
    <property type="evidence" value="ECO:0007669"/>
    <property type="project" value="UniProtKB-KW"/>
</dbReference>
<dbReference type="GO" id="GO:0006865">
    <property type="term" value="P:amino acid transport"/>
    <property type="evidence" value="ECO:0007669"/>
    <property type="project" value="UniProtKB-KW"/>
</dbReference>
<dbReference type="Gene3D" id="1.20.1740.10">
    <property type="entry name" value="Amino acid/polyamine transporter I"/>
    <property type="match status" value="1"/>
</dbReference>
<dbReference type="InterPro" id="IPR002293">
    <property type="entry name" value="AA/rel_permease1"/>
</dbReference>
<dbReference type="InterPro" id="IPR004754">
    <property type="entry name" value="Amino_acid_antiprt"/>
</dbReference>
<dbReference type="InterPro" id="IPR050367">
    <property type="entry name" value="APC_superfamily"/>
</dbReference>
<dbReference type="NCBIfam" id="TIGR00905">
    <property type="entry name" value="2A0302"/>
    <property type="match status" value="1"/>
</dbReference>
<dbReference type="PANTHER" id="PTHR42770">
    <property type="entry name" value="AMINO ACID TRANSPORTER-RELATED"/>
    <property type="match status" value="1"/>
</dbReference>
<dbReference type="PANTHER" id="PTHR42770:SF4">
    <property type="entry name" value="ARGININE_ORNITHINE ANTIPORTER-RELATED"/>
    <property type="match status" value="1"/>
</dbReference>
<dbReference type="Pfam" id="PF13520">
    <property type="entry name" value="AA_permease_2"/>
    <property type="match status" value="1"/>
</dbReference>
<dbReference type="PIRSF" id="PIRSF006060">
    <property type="entry name" value="AA_transporter"/>
    <property type="match status" value="1"/>
</dbReference>
<evidence type="ECO:0000250" key="1"/>
<evidence type="ECO:0000255" key="2"/>
<evidence type="ECO:0000305" key="3"/>
<accession>B0B7U3</accession>
<proteinExistence type="inferred from homology"/>
<feature type="chain" id="PRO_5000300957" description="Arginine/agmatine antiporter">
    <location>
        <begin position="1"/>
        <end position="483"/>
    </location>
</feature>
<feature type="transmembrane region" description="Helical" evidence="2">
    <location>
        <begin position="11"/>
        <end position="33"/>
    </location>
</feature>
<feature type="transmembrane region" description="Helical" evidence="2">
    <location>
        <begin position="48"/>
        <end position="70"/>
    </location>
</feature>
<feature type="transmembrane region" description="Helical" evidence="2">
    <location>
        <begin position="90"/>
        <end position="112"/>
    </location>
</feature>
<feature type="transmembrane region" description="Helical" evidence="2">
    <location>
        <begin position="127"/>
        <end position="149"/>
    </location>
</feature>
<feature type="transmembrane region" description="Helical" evidence="2">
    <location>
        <begin position="156"/>
        <end position="178"/>
    </location>
</feature>
<feature type="transmembrane region" description="Helical" evidence="2">
    <location>
        <begin position="209"/>
        <end position="228"/>
    </location>
</feature>
<feature type="transmembrane region" description="Helical" evidence="2">
    <location>
        <begin position="241"/>
        <end position="263"/>
    </location>
</feature>
<feature type="transmembrane region" description="Helical" evidence="2">
    <location>
        <begin position="293"/>
        <end position="315"/>
    </location>
</feature>
<feature type="transmembrane region" description="Helical" evidence="2">
    <location>
        <begin position="335"/>
        <end position="357"/>
    </location>
</feature>
<feature type="transmembrane region" description="Helical" evidence="2">
    <location>
        <begin position="367"/>
        <end position="389"/>
    </location>
</feature>
<feature type="transmembrane region" description="Helical" evidence="2">
    <location>
        <begin position="415"/>
        <end position="435"/>
    </location>
</feature>
<feature type="transmembrane region" description="Helical" evidence="2">
    <location>
        <begin position="458"/>
        <end position="477"/>
    </location>
</feature>